<keyword id="KW-0963">Cytoplasm</keyword>
<keyword id="KW-0217">Developmental protein</keyword>
<keyword id="KW-0597">Phosphoprotein</keyword>
<keyword id="KW-0676">Redox-active center</keyword>
<keyword id="KW-1185">Reference proteome</keyword>
<keyword id="KW-0964">Secreted</keyword>
<keyword id="KW-0712">Selenocysteine</keyword>
<keyword id="KW-0732">Signal</keyword>
<proteinExistence type="evidence at protein level"/>
<dbReference type="EMBL" id="AF396455">
    <property type="protein sequence ID" value="AAK72982.1"/>
    <property type="molecule type" value="mRNA"/>
</dbReference>
<dbReference type="EMBL" id="AE014298">
    <property type="protein sequence ID" value="AAF48293.3"/>
    <property type="molecule type" value="Genomic_DNA"/>
</dbReference>
<dbReference type="EMBL" id="AY119185">
    <property type="protein sequence ID" value="AAM51045.1"/>
    <property type="status" value="ALT_SEQ"/>
    <property type="molecule type" value="mRNA"/>
</dbReference>
<dbReference type="RefSeq" id="NP_572903.3">
    <property type="nucleotide sequence ID" value="NM_132675.3"/>
</dbReference>
<dbReference type="BioGRID" id="58694">
    <property type="interactions" value="19"/>
</dbReference>
<dbReference type="FunCoup" id="Q9VYB0">
    <property type="interactions" value="68"/>
</dbReference>
<dbReference type="IntAct" id="Q9VYB0">
    <property type="interactions" value="36"/>
</dbReference>
<dbReference type="STRING" id="7227.FBpp0073637"/>
<dbReference type="iPTMnet" id="Q9VYB0"/>
<dbReference type="PaxDb" id="7227-FBpp0073637"/>
<dbReference type="EnsemblMetazoa" id="FBtr0073806">
    <property type="protein sequence ID" value="FBpp0073637"/>
    <property type="gene ID" value="FBgn0030501"/>
</dbReference>
<dbReference type="GeneID" id="32317"/>
<dbReference type="KEGG" id="dme:Dmel_CG11177"/>
<dbReference type="AGR" id="FB:FBgn0030501"/>
<dbReference type="CTD" id="32317"/>
<dbReference type="FlyBase" id="FBgn0030501">
    <property type="gene designation" value="BthD"/>
</dbReference>
<dbReference type="VEuPathDB" id="VectorBase:FBgn0030501"/>
<dbReference type="eggNOG" id="ENOG502R8DX">
    <property type="taxonomic scope" value="Eukaryota"/>
</dbReference>
<dbReference type="HOGENOM" id="CLU_1246551_0_0_1"/>
<dbReference type="InParanoid" id="Q9VYB0"/>
<dbReference type="OrthoDB" id="1933874at2759"/>
<dbReference type="BioGRID-ORCS" id="32317">
    <property type="hits" value="0 hits in 1 CRISPR screen"/>
</dbReference>
<dbReference type="GenomeRNAi" id="32317"/>
<dbReference type="PRO" id="PR:Q9VYB0"/>
<dbReference type="Proteomes" id="UP000000803">
    <property type="component" value="Chromosome X"/>
</dbReference>
<dbReference type="Bgee" id="FBgn0030501">
    <property type="expression patterns" value="Expressed in cleaving embryo and 23 other cell types or tissues"/>
</dbReference>
<dbReference type="ExpressionAtlas" id="Q9VYB0">
    <property type="expression patterns" value="baseline and differential"/>
</dbReference>
<dbReference type="GO" id="GO:0005737">
    <property type="term" value="C:cytoplasm"/>
    <property type="evidence" value="ECO:0000314"/>
    <property type="project" value="UniProtKB"/>
</dbReference>
<dbReference type="GO" id="GO:0005576">
    <property type="term" value="C:extracellular region"/>
    <property type="evidence" value="ECO:0007669"/>
    <property type="project" value="UniProtKB-SubCell"/>
</dbReference>
<dbReference type="GO" id="GO:0005794">
    <property type="term" value="C:Golgi apparatus"/>
    <property type="evidence" value="ECO:0000314"/>
    <property type="project" value="FlyBase"/>
</dbReference>
<dbReference type="GO" id="GO:0045454">
    <property type="term" value="P:cell redox homeostasis"/>
    <property type="evidence" value="ECO:0000304"/>
    <property type="project" value="UniProtKB"/>
</dbReference>
<dbReference type="GO" id="GO:0008340">
    <property type="term" value="P:determination of adult lifespan"/>
    <property type="evidence" value="ECO:0000314"/>
    <property type="project" value="UniProtKB"/>
</dbReference>
<dbReference type="GO" id="GO:0009792">
    <property type="term" value="P:embryo development ending in birth or egg hatching"/>
    <property type="evidence" value="ECO:0000314"/>
    <property type="project" value="UniProtKB"/>
</dbReference>
<dbReference type="GO" id="GO:0007436">
    <property type="term" value="P:larval salivary gland morphogenesis"/>
    <property type="evidence" value="ECO:0000315"/>
    <property type="project" value="FlyBase"/>
</dbReference>
<dbReference type="GO" id="GO:0051775">
    <property type="term" value="P:response to redox state"/>
    <property type="evidence" value="ECO:0000303"/>
    <property type="project" value="UniProtKB"/>
</dbReference>
<dbReference type="GO" id="GO:0007432">
    <property type="term" value="P:salivary gland boundary specification"/>
    <property type="evidence" value="ECO:0000314"/>
    <property type="project" value="UniProtKB"/>
</dbReference>
<dbReference type="InterPro" id="IPR011893">
    <property type="entry name" value="Selenoprotein_Rdx-typ"/>
</dbReference>
<dbReference type="InterPro" id="IPR052674">
    <property type="entry name" value="SelWTH-like"/>
</dbReference>
<dbReference type="NCBIfam" id="TIGR02174">
    <property type="entry name" value="CXXU_selWTH"/>
    <property type="match status" value="1"/>
</dbReference>
<dbReference type="PANTHER" id="PTHR33638">
    <property type="entry name" value="SELENOPROTEIN H"/>
    <property type="match status" value="1"/>
</dbReference>
<dbReference type="PANTHER" id="PTHR33638:SF1">
    <property type="entry name" value="SELENOPROTEIN H"/>
    <property type="match status" value="1"/>
</dbReference>
<feature type="signal peptide" evidence="2">
    <location>
        <begin position="1"/>
        <end status="unknown"/>
    </location>
</feature>
<feature type="chain" id="PRO_0000020835" description="Selenoprotein BthD">
    <location>
        <begin status="unknown"/>
        <end position="249"/>
    </location>
</feature>
<feature type="region of interest" description="Disordered" evidence="3">
    <location>
        <begin position="1"/>
        <end position="22"/>
    </location>
</feature>
<feature type="region of interest" description="Disordered" evidence="3">
    <location>
        <begin position="122"/>
        <end position="249"/>
    </location>
</feature>
<feature type="compositionally biased region" description="Basic and acidic residues" evidence="3">
    <location>
        <begin position="8"/>
        <end position="19"/>
    </location>
</feature>
<feature type="compositionally biased region" description="Basic and acidic residues" evidence="3">
    <location>
        <begin position="175"/>
        <end position="198"/>
    </location>
</feature>
<feature type="compositionally biased region" description="Basic residues" evidence="3">
    <location>
        <begin position="199"/>
        <end position="210"/>
    </location>
</feature>
<feature type="non-standard amino acid" description="Selenocysteine">
    <location>
        <position position="37"/>
    </location>
</feature>
<feature type="modified residue" description="Phosphoserine" evidence="7">
    <location>
        <position position="147"/>
    </location>
</feature>
<feature type="cross-link" description="Cysteinyl-selenocysteine (Cys-Sec); redox-active" evidence="1">
    <location>
        <begin position="34"/>
        <end position="37"/>
    </location>
</feature>
<feature type="sequence conflict" description="In Ref. 2; AAF48293." evidence="8" ref="2">
    <original>Q</original>
    <variation>R</variation>
    <location>
        <position position="114"/>
    </location>
</feature>
<feature type="sequence conflict" description="In Ref. 2; AAF48293." evidence="8" ref="2">
    <original>T</original>
    <variation>I</variation>
    <location>
        <position position="129"/>
    </location>
</feature>
<feature type="sequence conflict" description="In Ref. 2; AAF48293." evidence="8" ref="2">
    <original>S</original>
    <variation>L</variation>
    <location>
        <position position="134"/>
    </location>
</feature>
<feature type="sequence conflict" description="In Ref. 2; AAF48293." evidence="8" ref="2">
    <original>I</original>
    <variation>L</variation>
    <location>
        <position position="145"/>
    </location>
</feature>
<feature type="sequence conflict" description="In Ref. 2; AAF48293." evidence="8" ref="2">
    <original>K</original>
    <variation>E</variation>
    <location>
        <position position="161"/>
    </location>
</feature>
<name>BTHD_DROME</name>
<organism>
    <name type="scientific">Drosophila melanogaster</name>
    <name type="common">Fruit fly</name>
    <dbReference type="NCBI Taxonomy" id="7227"/>
    <lineage>
        <taxon>Eukaryota</taxon>
        <taxon>Metazoa</taxon>
        <taxon>Ecdysozoa</taxon>
        <taxon>Arthropoda</taxon>
        <taxon>Hexapoda</taxon>
        <taxon>Insecta</taxon>
        <taxon>Pterygota</taxon>
        <taxon>Neoptera</taxon>
        <taxon>Endopterygota</taxon>
        <taxon>Diptera</taxon>
        <taxon>Brachycera</taxon>
        <taxon>Muscomorpha</taxon>
        <taxon>Ephydroidea</taxon>
        <taxon>Drosophilidae</taxon>
        <taxon>Drosophila</taxon>
        <taxon>Sophophora</taxon>
    </lineage>
</organism>
<evidence type="ECO:0000250" key="1"/>
<evidence type="ECO:0000255" key="2"/>
<evidence type="ECO:0000256" key="3">
    <source>
        <dbReference type="SAM" id="MobiDB-lite"/>
    </source>
</evidence>
<evidence type="ECO:0000269" key="4">
    <source>
    </source>
</evidence>
<evidence type="ECO:0000269" key="5">
    <source>
    </source>
</evidence>
<evidence type="ECO:0000269" key="6">
    <source>
    </source>
</evidence>
<evidence type="ECO:0000269" key="7">
    <source>
    </source>
</evidence>
<evidence type="ECO:0000305" key="8"/>
<sequence>MPPKRNKKAEAPIAERDAGEELDPNAPVLYVEHCRSURVFRRRAEELHSALRERGLQQLQLQLNALGAPRRGAFELSLSAGGMGKQEQVALWSGLKRGPPRARKFPTVEEVYDQIVGILGDQQESKEQTNTQKSSKIDLPGSEAIASPKKSESTEEAQENKAPTSTSTSRKSKKEQKSEEEPTQVDSKEAKQSKELVKTKRQPKAQKKQAKASESQEEVAEDKPPSSQKRKRTTRSSTDEATAGAKRRR</sequence>
<gene>
    <name type="primary">BthD</name>
    <name type="ORF">CG11177</name>
</gene>
<comment type="function">
    <text evidence="5 6">May be involved in a redox-related process. Required for survival and specifically for salivary gland morphogenesis.</text>
</comment>
<comment type="subcellular location">
    <subcellularLocation>
        <location evidence="6">Cytoplasm</location>
    </subcellularLocation>
    <subcellularLocation>
        <location evidence="6">Secreted</location>
    </subcellularLocation>
    <text>Secreted into the salivary gland lumen.</text>
</comment>
<comment type="tissue specificity">
    <text evidence="5 6">Expressed in the developing salivary gland at late stages of embryogenesis. Also expressed in brain, neuroblast and wing disk.</text>
</comment>
<comment type="developmental stage">
    <text evidence="4 5">Expressed both maternally and zygotically, low level of expression in larvae. Expression in embryos is found within syncytial blastoderm, cellular blastoderm and gastrulation stages.</text>
</comment>
<comment type="sequence caution" evidence="8">
    <conflict type="erroneous termination">
        <sequence resource="EMBL-CDS" id="AAM51045"/>
    </conflict>
    <text>Truncated C-terminus.</text>
</comment>
<accession>Q9VYB0</accession>
<accession>Q8MRZ5</accession>
<accession>Q962X5</accession>
<protein>
    <recommendedName>
        <fullName>Selenoprotein BthD</fullName>
    </recommendedName>
    <alternativeName>
        <fullName>dSelM</fullName>
    </alternativeName>
</protein>
<reference key="1">
    <citation type="journal article" date="2001" name="J. Biol. Chem.">
        <title>Selenium metabolism in Drosophila: selenoproteins, selenoprotein mRNA expression, fertility, and mortality.</title>
        <authorList>
            <person name="Martin-Romero F.J."/>
            <person name="Kryukov G.V."/>
            <person name="Lobanov A.V."/>
            <person name="Carlson B.A."/>
            <person name="Lee B.J."/>
            <person name="Gladyshev V.N."/>
            <person name="Hatfield D.L."/>
        </authorList>
    </citation>
    <scope>NUCLEOTIDE SEQUENCE [MRNA]</scope>
    <scope>DEVELOPMENTAL STAGE</scope>
</reference>
<reference key="2">
    <citation type="journal article" date="2000" name="Science">
        <title>The genome sequence of Drosophila melanogaster.</title>
        <authorList>
            <person name="Adams M.D."/>
            <person name="Celniker S.E."/>
            <person name="Holt R.A."/>
            <person name="Evans C.A."/>
            <person name="Gocayne J.D."/>
            <person name="Amanatides P.G."/>
            <person name="Scherer S.E."/>
            <person name="Li P.W."/>
            <person name="Hoskins R.A."/>
            <person name="Galle R.F."/>
            <person name="George R.A."/>
            <person name="Lewis S.E."/>
            <person name="Richards S."/>
            <person name="Ashburner M."/>
            <person name="Henderson S.N."/>
            <person name="Sutton G.G."/>
            <person name="Wortman J.R."/>
            <person name="Yandell M.D."/>
            <person name="Zhang Q."/>
            <person name="Chen L.X."/>
            <person name="Brandon R.C."/>
            <person name="Rogers Y.-H.C."/>
            <person name="Blazej R.G."/>
            <person name="Champe M."/>
            <person name="Pfeiffer B.D."/>
            <person name="Wan K.H."/>
            <person name="Doyle C."/>
            <person name="Baxter E.G."/>
            <person name="Helt G."/>
            <person name="Nelson C.R."/>
            <person name="Miklos G.L.G."/>
            <person name="Abril J.F."/>
            <person name="Agbayani A."/>
            <person name="An H.-J."/>
            <person name="Andrews-Pfannkoch C."/>
            <person name="Baldwin D."/>
            <person name="Ballew R.M."/>
            <person name="Basu A."/>
            <person name="Baxendale J."/>
            <person name="Bayraktaroglu L."/>
            <person name="Beasley E.M."/>
            <person name="Beeson K.Y."/>
            <person name="Benos P.V."/>
            <person name="Berman B.P."/>
            <person name="Bhandari D."/>
            <person name="Bolshakov S."/>
            <person name="Borkova D."/>
            <person name="Botchan M.R."/>
            <person name="Bouck J."/>
            <person name="Brokstein P."/>
            <person name="Brottier P."/>
            <person name="Burtis K.C."/>
            <person name="Busam D.A."/>
            <person name="Butler H."/>
            <person name="Cadieu E."/>
            <person name="Center A."/>
            <person name="Chandra I."/>
            <person name="Cherry J.M."/>
            <person name="Cawley S."/>
            <person name="Dahlke C."/>
            <person name="Davenport L.B."/>
            <person name="Davies P."/>
            <person name="de Pablos B."/>
            <person name="Delcher A."/>
            <person name="Deng Z."/>
            <person name="Mays A.D."/>
            <person name="Dew I."/>
            <person name="Dietz S.M."/>
            <person name="Dodson K."/>
            <person name="Doup L.E."/>
            <person name="Downes M."/>
            <person name="Dugan-Rocha S."/>
            <person name="Dunkov B.C."/>
            <person name="Dunn P."/>
            <person name="Durbin K.J."/>
            <person name="Evangelista C.C."/>
            <person name="Ferraz C."/>
            <person name="Ferriera S."/>
            <person name="Fleischmann W."/>
            <person name="Fosler C."/>
            <person name="Gabrielian A.E."/>
            <person name="Garg N.S."/>
            <person name="Gelbart W.M."/>
            <person name="Glasser K."/>
            <person name="Glodek A."/>
            <person name="Gong F."/>
            <person name="Gorrell J.H."/>
            <person name="Gu Z."/>
            <person name="Guan P."/>
            <person name="Harris M."/>
            <person name="Harris N.L."/>
            <person name="Harvey D.A."/>
            <person name="Heiman T.J."/>
            <person name="Hernandez J.R."/>
            <person name="Houck J."/>
            <person name="Hostin D."/>
            <person name="Houston K.A."/>
            <person name="Howland T.J."/>
            <person name="Wei M.-H."/>
            <person name="Ibegwam C."/>
            <person name="Jalali M."/>
            <person name="Kalush F."/>
            <person name="Karpen G.H."/>
            <person name="Ke Z."/>
            <person name="Kennison J.A."/>
            <person name="Ketchum K.A."/>
            <person name="Kimmel B.E."/>
            <person name="Kodira C.D."/>
            <person name="Kraft C.L."/>
            <person name="Kravitz S."/>
            <person name="Kulp D."/>
            <person name="Lai Z."/>
            <person name="Lasko P."/>
            <person name="Lei Y."/>
            <person name="Levitsky A.A."/>
            <person name="Li J.H."/>
            <person name="Li Z."/>
            <person name="Liang Y."/>
            <person name="Lin X."/>
            <person name="Liu X."/>
            <person name="Mattei B."/>
            <person name="McIntosh T.C."/>
            <person name="McLeod M.P."/>
            <person name="McPherson D."/>
            <person name="Merkulov G."/>
            <person name="Milshina N.V."/>
            <person name="Mobarry C."/>
            <person name="Morris J."/>
            <person name="Moshrefi A."/>
            <person name="Mount S.M."/>
            <person name="Moy M."/>
            <person name="Murphy B."/>
            <person name="Murphy L."/>
            <person name="Muzny D.M."/>
            <person name="Nelson D.L."/>
            <person name="Nelson D.R."/>
            <person name="Nelson K.A."/>
            <person name="Nixon K."/>
            <person name="Nusskern D.R."/>
            <person name="Pacleb J.M."/>
            <person name="Palazzolo M."/>
            <person name="Pittman G.S."/>
            <person name="Pan S."/>
            <person name="Pollard J."/>
            <person name="Puri V."/>
            <person name="Reese M.G."/>
            <person name="Reinert K."/>
            <person name="Remington K."/>
            <person name="Saunders R.D.C."/>
            <person name="Scheeler F."/>
            <person name="Shen H."/>
            <person name="Shue B.C."/>
            <person name="Siden-Kiamos I."/>
            <person name="Simpson M."/>
            <person name="Skupski M.P."/>
            <person name="Smith T.J."/>
            <person name="Spier E."/>
            <person name="Spradling A.C."/>
            <person name="Stapleton M."/>
            <person name="Strong R."/>
            <person name="Sun E."/>
            <person name="Svirskas R."/>
            <person name="Tector C."/>
            <person name="Turner R."/>
            <person name="Venter E."/>
            <person name="Wang A.H."/>
            <person name="Wang X."/>
            <person name="Wang Z.-Y."/>
            <person name="Wassarman D.A."/>
            <person name="Weinstock G.M."/>
            <person name="Weissenbach J."/>
            <person name="Williams S.M."/>
            <person name="Woodage T."/>
            <person name="Worley K.C."/>
            <person name="Wu D."/>
            <person name="Yang S."/>
            <person name="Yao Q.A."/>
            <person name="Ye J."/>
            <person name="Yeh R.-F."/>
            <person name="Zaveri J.S."/>
            <person name="Zhan M."/>
            <person name="Zhang G."/>
            <person name="Zhao Q."/>
            <person name="Zheng L."/>
            <person name="Zheng X.H."/>
            <person name="Zhong F.N."/>
            <person name="Zhong W."/>
            <person name="Zhou X."/>
            <person name="Zhu S.C."/>
            <person name="Zhu X."/>
            <person name="Smith H.O."/>
            <person name="Gibbs R.A."/>
            <person name="Myers E.W."/>
            <person name="Rubin G.M."/>
            <person name="Venter J.C."/>
        </authorList>
    </citation>
    <scope>NUCLEOTIDE SEQUENCE [LARGE SCALE GENOMIC DNA]</scope>
    <source>
        <strain>Berkeley</strain>
    </source>
</reference>
<reference key="3">
    <citation type="journal article" date="2002" name="Genome Biol.">
        <title>Annotation of the Drosophila melanogaster euchromatic genome: a systematic review.</title>
        <authorList>
            <person name="Misra S."/>
            <person name="Crosby M.A."/>
            <person name="Mungall C.J."/>
            <person name="Matthews B.B."/>
            <person name="Campbell K.S."/>
            <person name="Hradecky P."/>
            <person name="Huang Y."/>
            <person name="Kaminker J.S."/>
            <person name="Millburn G.H."/>
            <person name="Prochnik S.E."/>
            <person name="Smith C.D."/>
            <person name="Tupy J.L."/>
            <person name="Whitfield E.J."/>
            <person name="Bayraktaroglu L."/>
            <person name="Berman B.P."/>
            <person name="Bettencourt B.R."/>
            <person name="Celniker S.E."/>
            <person name="de Grey A.D.N.J."/>
            <person name="Drysdale R.A."/>
            <person name="Harris N.L."/>
            <person name="Richter J."/>
            <person name="Russo S."/>
            <person name="Schroeder A.J."/>
            <person name="Shu S.Q."/>
            <person name="Stapleton M."/>
            <person name="Yamada C."/>
            <person name="Ashburner M."/>
            <person name="Gelbart W.M."/>
            <person name="Rubin G.M."/>
            <person name="Lewis S.E."/>
        </authorList>
    </citation>
    <scope>GENOME REANNOTATION</scope>
    <source>
        <strain>Berkeley</strain>
    </source>
</reference>
<reference key="4">
    <citation type="journal article" date="2002" name="Genome Biol.">
        <title>A Drosophila full-length cDNA resource.</title>
        <authorList>
            <person name="Stapleton M."/>
            <person name="Carlson J.W."/>
            <person name="Brokstein P."/>
            <person name="Yu C."/>
            <person name="Champe M."/>
            <person name="George R.A."/>
            <person name="Guarin H."/>
            <person name="Kronmiller B."/>
            <person name="Pacleb J.M."/>
            <person name="Park S."/>
            <person name="Wan K.H."/>
            <person name="Rubin G.M."/>
            <person name="Celniker S.E."/>
        </authorList>
    </citation>
    <scope>NUCLEOTIDE SEQUENCE [LARGE SCALE MRNA]</scope>
    <source>
        <strain>Berkeley</strain>
        <tissue>Embryo</tissue>
    </source>
</reference>
<reference key="5">
    <citation type="journal article" date="2001" name="EMBO Rep.">
        <title>In silico identification of novel selenoproteins in the Drosophila melanogaster genome.</title>
        <authorList>
            <person name="Castellano S."/>
            <person name="Morozova N."/>
            <person name="Morey M."/>
            <person name="Berry M.J."/>
            <person name="Serras F."/>
            <person name="Corominas M."/>
            <person name="Guigo R."/>
        </authorList>
    </citation>
    <scope>FUNCTION</scope>
    <scope>TISSUE SPECIFICITY</scope>
    <scope>DEVELOPMENTAL STAGE</scope>
</reference>
<reference key="6">
    <citation type="journal article" date="2003" name="Mol. Cell. Biol.">
        <title>The Drosophila selenoprotein BthD is required for survival and has a role in salivary gland development.</title>
        <authorList>
            <person name="Kwon S.Y."/>
            <person name="Badenhorst P."/>
            <person name="Martin-Romero F.J."/>
            <person name="Carlson B.A."/>
            <person name="Paterson B.M."/>
            <person name="Gladyshev V.N."/>
            <person name="Lee B.J."/>
            <person name="Hatfield D.L."/>
        </authorList>
    </citation>
    <scope>FUNCTION</scope>
    <scope>SUBCELLULAR LOCATION</scope>
    <scope>TISSUE SPECIFICITY</scope>
</reference>
<reference key="7">
    <citation type="journal article" date="2007" name="Mol. Biosyst.">
        <title>An integrated chemical, mass spectrometric and computational strategy for (quantitative) phosphoproteomics: application to Drosophila melanogaster Kc167 cells.</title>
        <authorList>
            <person name="Bodenmiller B."/>
            <person name="Mueller L.N."/>
            <person name="Pedrioli P.G.A."/>
            <person name="Pflieger D."/>
            <person name="Juenger M.A."/>
            <person name="Eng J.K."/>
            <person name="Aebersold R."/>
            <person name="Tao W.A."/>
        </authorList>
    </citation>
    <scope>PHOSPHORYLATION [LARGE SCALE ANALYSIS] AT SER-147</scope>
    <scope>IDENTIFICATION BY MASS SPECTROMETRY</scope>
</reference>